<keyword id="KW-0167">Capsid protein</keyword>
<keyword id="KW-0175">Coiled coil</keyword>
<keyword id="KW-1015">Disulfide bond</keyword>
<keyword id="KW-0348">Hemagglutinin</keyword>
<keyword id="KW-1032">Host cell membrane</keyword>
<keyword id="KW-1035">Host cytoplasm</keyword>
<keyword id="KW-1037">Host cytoskeleton</keyword>
<keyword id="KW-1038">Host endoplasmic reticulum</keyword>
<keyword id="KW-1043">Host membrane</keyword>
<keyword id="KW-0945">Host-virus interaction</keyword>
<keyword id="KW-0472">Membrane</keyword>
<keyword id="KW-1152">Outer capsid protein</keyword>
<keyword id="KW-1161">Viral attachment to host cell</keyword>
<keyword id="KW-1162">Viral penetration into host cytoplasm</keyword>
<keyword id="KW-1173">Viral penetration via permeabilization of host membrane</keyword>
<keyword id="KW-0946">Virion</keyword>
<keyword id="KW-1160">Virus entry into host cell</keyword>
<comment type="function">
    <molecule>Outer capsid protein VP4</molecule>
    <text evidence="1">Spike-forming protein that mediates virion attachment to the host epithelial cell receptors and plays a major role in cell penetration, determination of host range restriction and virulence. Rotavirus attachment and entry into the host cell probably involves multiple sequential contacts between the outer capsid proteins VP4 and VP7, and the cell receptors. It is subsequently lost, together with VP7, following virus entry into the host cell. Following entry into the host cell, low intracellular or intravesicular Ca(2+) concentration probably causes the calcium-stabilized VP7 trimers to dissociate from the virion. This step is probably necessary for the membrane-disrupting entry step and the release of VP4, which is locked onto the virion by VP7. During the virus exit from the host cell, VP4 seems to be required to target the newly formed virions to the host cell lipid rafts.</text>
</comment>
<comment type="function">
    <molecule>Outer capsid protein VP5*</molecule>
    <text evidence="1">Forms the spike 'foot' and 'body' and acts as a membrane permeabilization protein that mediates release of viral particles from endosomal compartments into the cytoplasm. During entry, the part of VP5* that protrudes from the virus folds back on itself and reorganizes from a local dimer to a trimer. This reorganization may be linked to membrane penetration by exposing VP5* hydrophobic region. In integrin-dependent strains, VP5* targets the integrin heterodimer ITGA2/ITGB1 for cell attachment.</text>
</comment>
<comment type="function">
    <molecule>Outer capsid protein VP8*</molecule>
    <text evidence="1">Forms the head of the spikes and mediates the recognition of specific host cell surface glycans. It is the viral hemagglutinin and an important target of neutralizing antibodies. In sialic acid-dependent strains, VP8* binds to host cell sialic acid, most probably a ganglioside, providing the initial contact. In some other strains, VP8* mediates the attachment to histo-blood group antigens (HBGAs) for viral entry.</text>
</comment>
<comment type="subunit">
    <molecule>Outer capsid protein VP4</molecule>
    <text evidence="1">Homotrimer. VP4 adopts a dimeric appearance above the capsid surface, while forming a trimeric base anchored inside the capsid layer. Only hints of the third molecule are observed above the capsid surface. It probably performs a series of molecular rearrangements during viral entry. Prior to trypsin cleavage, it is flexible. The priming trypsin cleavage triggers its rearrangement into rigid spikes with approximate two-fold symmetry of their protruding parts. After an unknown second triggering event, cleaved VP4 may undergo another rearrangement, in which two VP5* subunits fold back on themselves and join a third subunit to form a tightly associated trimer, shaped like a folded umbrella. Interacts with VP6. Interacts with VP7.</text>
</comment>
<comment type="subunit">
    <molecule>Outer capsid protein VP5*</molecule>
    <text evidence="1">Homotrimer. The trimer is coiled-coil stabilized by its C-terminus, however, its N-terminus, known as antigen domain or 'body', seems to be flexible allowing it to self-associate either as a dimer or a trimer.</text>
</comment>
<comment type="subcellular location">
    <molecule>Outer capsid protein VP4</molecule>
    <subcellularLocation>
        <location evidence="1">Virion</location>
    </subcellularLocation>
    <subcellularLocation>
        <location evidence="1">Host rough endoplasmic reticulum</location>
    </subcellularLocation>
    <subcellularLocation>
        <location evidence="1">Host cell membrane</location>
    </subcellularLocation>
    <subcellularLocation>
        <location evidence="1">Host cytoplasm</location>
        <location evidence="1">Host cytoskeleton</location>
    </subcellularLocation>
    <subcellularLocation>
        <location evidence="1">Host endoplasmic reticulum-Golgi intermediate compartment</location>
    </subcellularLocation>
    <text evidence="1">The outer layer contains 180 copies of VP4, grouped as 60 dimers. Immature double-layered particles assembled in the cytoplasm bud across the membrane of the endoplasmic reticulum, acquiring during this process a transient lipid membrane that is modified with the ER resident viral glycoproteins NSP4 and VP7; these enveloped particles also contain VP4. As the particles move towards the interior of the ER cisternae, the transient lipid membrane and the non-structural protein NSP4 are lost, while the virus surface proteins VP4 and VP7 rearrange to form the outermost virus protein layer, yielding mature infectious triple-layered particles. VP4 also seems to associate with lipid rafts of the host cell membrane probably for the exit of the virus from the infected cell by an alternate pathway.</text>
</comment>
<comment type="subcellular location">
    <molecule>Outer capsid protein VP8*</molecule>
    <subcellularLocation>
        <location evidence="1">Virion</location>
    </subcellularLocation>
    <text evidence="1">Outer capsid protein.</text>
</comment>
<comment type="subcellular location">
    <molecule>Outer capsid protein VP5*</molecule>
    <subcellularLocation>
        <location evidence="1">Virion</location>
    </subcellularLocation>
    <text evidence="1">Outer capsid protein.</text>
</comment>
<comment type="domain">
    <molecule>Outer capsid protein VP4</molecule>
    <text evidence="1">The VP4 spike is divided into a foot, a stalk and body, and a head.</text>
</comment>
<comment type="PTM">
    <molecule>Outer capsid protein VP4</molecule>
    <text evidence="1">Proteolytic cleavage by trypsin results in activation of VP4 functions and greatly increases infectivity. The penetration into the host cell is dependent on trypsin treatment of VP4. It produces two peptides, VP5* and VP8* that remain associated with the virion. Cleavage of VP4 by trypsin probably occurs in vivo in the lumen of the intestine prior to infection of enterocytes. Trypsin seems to be incorporated into the three-layered viral particles but remains inactive as long as the viral outer capsid is intact and would only be activated upon the solubilization of the latter.</text>
</comment>
<comment type="miscellaneous">
    <text evidence="2 3">This strain probably does not use sialic acid to attach to the host cell.</text>
</comment>
<comment type="miscellaneous">
    <text evidence="1">In group A rotaviruses, VP4 defines the P serotype.</text>
</comment>
<comment type="miscellaneous">
    <text evidence="1">Some rotavirus strains are neuraminidase-sensitive and require sialic acid to attach to the cell surface. Some rotavirus strains are integrin-dependent. Some rotavirus strains depend on ganglioside for their entry into the host cell. Hsp70 also seems to be involved in the entry of some strains.</text>
</comment>
<comment type="similarity">
    <text evidence="1">Belongs to the rotavirus VP4 family.</text>
</comment>
<feature type="chain" id="PRO_0000368140" description="Outer capsid protein VP4" evidence="1">
    <location>
        <begin position="1"/>
        <end position="775"/>
    </location>
</feature>
<feature type="chain" id="PRO_0000368141" description="Outer capsid protein VP8*" evidence="1">
    <location>
        <begin position="1"/>
        <end position="230"/>
    </location>
</feature>
<feature type="chain" id="PRO_0000368142" description="Outer capsid protein VP5*" evidence="1">
    <location>
        <begin position="247"/>
        <end position="775"/>
    </location>
</feature>
<feature type="region of interest" description="Spike head" evidence="1">
    <location>
        <begin position="65"/>
        <end position="223"/>
    </location>
</feature>
<feature type="region of interest" description="Spike body and stalk (antigen domain)" evidence="1">
    <location>
        <begin position="247"/>
        <end position="478"/>
    </location>
</feature>
<feature type="region of interest" description="Hydrophobic; possible role in virus entry into host cell" evidence="1">
    <location>
        <begin position="388"/>
        <end position="408"/>
    </location>
</feature>
<feature type="region of interest" description="Spike foot" evidence="1">
    <location>
        <begin position="509"/>
        <end position="775"/>
    </location>
</feature>
<feature type="coiled-coil region" evidence="1">
    <location>
        <begin position="483"/>
        <end position="510"/>
    </location>
</feature>
<feature type="short sequence motif" description="DGE motif; interaction with ITGA2/ITGB1 heterodimer" evidence="1">
    <location>
        <begin position="307"/>
        <end position="309"/>
    </location>
</feature>
<feature type="short sequence motif" description="YGL motif; interaction with ITGA4" evidence="1">
    <location>
        <begin position="447"/>
        <end position="449"/>
    </location>
</feature>
<feature type="short sequence motif" description="KID motif; interaction with HSPA8" evidence="1">
    <location>
        <begin position="643"/>
        <end position="645"/>
    </location>
</feature>
<feature type="site" description="Cleavage" evidence="1">
    <location>
        <begin position="230"/>
        <end position="231"/>
    </location>
</feature>
<feature type="site" description="Cleavage" evidence="1">
    <location>
        <begin position="240"/>
        <end position="241"/>
    </location>
</feature>
<feature type="site" description="Cleavage; associated with enhancement of infectivity" evidence="1">
    <location>
        <begin position="246"/>
        <end position="247"/>
    </location>
</feature>
<feature type="disulfide bond" evidence="1">
    <location>
        <begin position="317"/>
        <end position="379"/>
    </location>
</feature>
<name>VP4_ROTHO</name>
<organism>
    <name type="scientific">Rotavirus A (strain RVA/Human/Japan/MO/1982/G3P1A[8])</name>
    <name type="common">RV-A</name>
    <dbReference type="NCBI Taxonomy" id="10956"/>
    <lineage>
        <taxon>Viruses</taxon>
        <taxon>Riboviria</taxon>
        <taxon>Orthornavirae</taxon>
        <taxon>Duplornaviricota</taxon>
        <taxon>Resentoviricetes</taxon>
        <taxon>Reovirales</taxon>
        <taxon>Sedoreoviridae</taxon>
        <taxon>Rotavirus</taxon>
        <taxon>Rotavirus A</taxon>
    </lineage>
</organism>
<organismHost>
    <name type="scientific">Homo sapiens</name>
    <name type="common">Human</name>
    <dbReference type="NCBI Taxonomy" id="9606"/>
</organismHost>
<accession>Q9WAK4</accession>
<sequence>MASLIYRQLLTNSYSVDLHDEIEQIGSEKTQNVTVNPGPFAQTRYAPVNWGHGEINDSTTVELILDGPYQPTTFTPPIDYWILINSNTNGVVYESTNNSDFWTAVVAVEPHVSPVDRQYTVFGENKQFNVRNDSDKWKFLEMFRSSSQNEFYNRRTLTSDTKLVGILRYGGRIWTFHGETPRVNTDSSHNANLNDISIVIHSGFYIIPRSQECKCNEYINNGLPPIPNTRNVVPLSLSSRSIQYKRAQVNEDITISKTSLWKECTIIRDIIIRFKFGNSIVKLGGLGYKWSEISYKAANYQYNYLRDGEQVTAHTTCSVNGVNNFSYNGGFLPTDFSVSRYEVIKENSYVYVDYWDDSKAFRNMVYVRSLAANLNSVKCTGGSYDFSIPVGAWPVITGGAVSLHFAGVTLSTQFTDFVSLNSLRFRFSKTVDEPSFSILRTRTVNLYGLPAANPNNGNEYYEISGRFSLISLVPTNDDYQTPIMNSVTVRQDLERQLTDLREEFNSLSQEIAMSQLIDLALLPLDMFSMFSGIKSTIDLTKSMATSVMKKFRKSKLATSISEMTNSLSDAASSASRSVSIRSNISTISNWTNVSNDVSNVTNSLNDISTQTSTISKNLRLKEMITPTEGMSLDDISAAVLKTKIDMSTPIGKNTLPDIVPEASEKFIPKRSFRILKDDEVMEINTEGDVFAYKIDTLNEVPFDVNKFAELVTNSPVISAIIDFKTLKNLNDNYGITRIEALNLIKSNPNVLRDFINQNNPIIRNRIEQLILQCKL</sequence>
<dbReference type="EMBL" id="AB008278">
    <property type="protein sequence ID" value="BAA77543.1"/>
    <property type="molecule type" value="Genomic_RNA"/>
</dbReference>
<dbReference type="SMR" id="Q9WAK4"/>
<dbReference type="GO" id="GO:0044172">
    <property type="term" value="C:host cell endoplasmic reticulum-Golgi intermediate compartment"/>
    <property type="evidence" value="ECO:0007669"/>
    <property type="project" value="UniProtKB-SubCell"/>
</dbReference>
<dbReference type="GO" id="GO:0020002">
    <property type="term" value="C:host cell plasma membrane"/>
    <property type="evidence" value="ECO:0007669"/>
    <property type="project" value="UniProtKB-SubCell"/>
</dbReference>
<dbReference type="GO" id="GO:0044168">
    <property type="term" value="C:host cell rough endoplasmic reticulum"/>
    <property type="evidence" value="ECO:0007669"/>
    <property type="project" value="UniProtKB-SubCell"/>
</dbReference>
<dbReference type="GO" id="GO:0044163">
    <property type="term" value="C:host cytoskeleton"/>
    <property type="evidence" value="ECO:0007669"/>
    <property type="project" value="UniProtKB-SubCell"/>
</dbReference>
<dbReference type="GO" id="GO:0016020">
    <property type="term" value="C:membrane"/>
    <property type="evidence" value="ECO:0007669"/>
    <property type="project" value="UniProtKB-KW"/>
</dbReference>
<dbReference type="GO" id="GO:0039624">
    <property type="term" value="C:viral outer capsid"/>
    <property type="evidence" value="ECO:0007669"/>
    <property type="project" value="UniProtKB-UniRule"/>
</dbReference>
<dbReference type="GO" id="GO:0039665">
    <property type="term" value="P:permeabilization of host organelle membrane involved in viral entry into host cell"/>
    <property type="evidence" value="ECO:0007669"/>
    <property type="project" value="UniProtKB-UniRule"/>
</dbReference>
<dbReference type="GO" id="GO:0019062">
    <property type="term" value="P:virion attachment to host cell"/>
    <property type="evidence" value="ECO:0007669"/>
    <property type="project" value="UniProtKB-UniRule"/>
</dbReference>
<dbReference type="FunFam" id="2.60.120.200:FF:000303">
    <property type="entry name" value="Outer capsid protein VP4"/>
    <property type="match status" value="1"/>
</dbReference>
<dbReference type="Gene3D" id="1.20.5.170">
    <property type="match status" value="1"/>
</dbReference>
<dbReference type="Gene3D" id="2.60.120.200">
    <property type="match status" value="1"/>
</dbReference>
<dbReference type="HAMAP" id="MF_04132">
    <property type="entry name" value="Rota_A_VP4"/>
    <property type="match status" value="1"/>
</dbReference>
<dbReference type="HAMAP" id="MF_04125">
    <property type="entry name" value="Rota_VP4"/>
    <property type="match status" value="1"/>
</dbReference>
<dbReference type="InterPro" id="IPR013320">
    <property type="entry name" value="ConA-like_dom_sf"/>
</dbReference>
<dbReference type="InterPro" id="IPR042546">
    <property type="entry name" value="Rota_A_VP4"/>
</dbReference>
<dbReference type="InterPro" id="IPR035330">
    <property type="entry name" value="Rota_VP4_MID"/>
</dbReference>
<dbReference type="InterPro" id="IPR038017">
    <property type="entry name" value="Rota_VP4_MID_sf"/>
</dbReference>
<dbReference type="InterPro" id="IPR000416">
    <property type="entry name" value="VP4_concanavalin-like"/>
</dbReference>
<dbReference type="InterPro" id="IPR035329">
    <property type="entry name" value="VP4_helical"/>
</dbReference>
<dbReference type="Pfam" id="PF17477">
    <property type="entry name" value="Rota_VP4_MID"/>
    <property type="match status" value="1"/>
</dbReference>
<dbReference type="Pfam" id="PF00426">
    <property type="entry name" value="VP4_haemagglut"/>
    <property type="match status" value="1"/>
</dbReference>
<dbReference type="Pfam" id="PF17478">
    <property type="entry name" value="VP4_helical"/>
    <property type="match status" value="1"/>
</dbReference>
<dbReference type="SUPFAM" id="SSF49899">
    <property type="entry name" value="Concanavalin A-like lectins/glucanases"/>
    <property type="match status" value="1"/>
</dbReference>
<dbReference type="SUPFAM" id="SSF111379">
    <property type="entry name" value="VP4 membrane interaction domain"/>
    <property type="match status" value="1"/>
</dbReference>
<proteinExistence type="inferred from homology"/>
<reference key="1">
    <citation type="journal article" date="1999" name="Microbiol. Immunol.">
        <title>Genetic variation in the VP4 and NSP4 genes of human rotavirus serotype 3 (G3 type) isolated in China and Japan.</title>
        <authorList>
            <person name="Cao X.R."/>
            <person name="Akihara S."/>
            <person name="Fang Z.Y."/>
            <person name="Nakagomi O."/>
            <person name="Ushijima H."/>
        </authorList>
    </citation>
    <scope>NUCLEOTIDE SEQUENCE [GENOMIC RNA]</scope>
</reference>
<reference key="2">
    <citation type="journal article" date="2002" name="J. Virol.">
        <title>Initial interaction of rotavirus strains with N-acetylneuraminic (sialic) acid residues on the cell surface correlates with VP4 genotype, not species of origin.</title>
        <authorList>
            <person name="Ciarlet M."/>
            <person name="Ludert J.E."/>
            <person name="Iturriza-Gomara M."/>
            <person name="Liprandi F."/>
            <person name="Gray J.J."/>
            <person name="Desselberger U."/>
            <person name="Estes M.K."/>
        </authorList>
    </citation>
    <scope>SIALIC ACID INDEPENDENCY</scope>
</reference>
<reference key="3">
    <citation type="journal article" date="2006" name="Glycoconj. J.">
        <title>Role of sialic acids in rotavirus infection.</title>
        <authorList>
            <person name="Isa P."/>
            <person name="Arias C.F."/>
            <person name="Lopez S."/>
        </authorList>
    </citation>
    <scope>REVIEW</scope>
</reference>
<evidence type="ECO:0000255" key="1">
    <source>
        <dbReference type="HAMAP-Rule" id="MF_04132"/>
    </source>
</evidence>
<evidence type="ECO:0000269" key="2">
    <source>
    </source>
</evidence>
<evidence type="ECO:0000303" key="3">
    <source>
    </source>
</evidence>
<protein>
    <recommendedName>
        <fullName evidence="1">Outer capsid protein VP4</fullName>
    </recommendedName>
    <alternativeName>
        <fullName evidence="1">Hemagglutinin</fullName>
    </alternativeName>
    <component>
        <recommendedName>
            <fullName evidence="1">Outer capsid protein VP8*</fullName>
        </recommendedName>
    </component>
    <component>
        <recommendedName>
            <fullName evidence="1">Outer capsid protein VP5*</fullName>
        </recommendedName>
    </component>
</protein>